<gene>
    <name type="primary">yomG</name>
    <name type="ordered locus">BSU21370</name>
</gene>
<proteinExistence type="predicted"/>
<dbReference type="EMBL" id="AL009126">
    <property type="protein sequence ID" value="CAB14055.1"/>
    <property type="molecule type" value="Genomic_DNA"/>
</dbReference>
<dbReference type="RefSeq" id="NP_390020.1">
    <property type="nucleotide sequence ID" value="NC_000964.3"/>
</dbReference>
<dbReference type="RefSeq" id="WP_004398800.1">
    <property type="nucleotide sequence ID" value="NZ_OZ025638.1"/>
</dbReference>
<dbReference type="SMR" id="O31978"/>
<dbReference type="FunCoup" id="O31978">
    <property type="interactions" value="174"/>
</dbReference>
<dbReference type="STRING" id="224308.BSU21370"/>
<dbReference type="PaxDb" id="224308-BSU21370"/>
<dbReference type="EnsemblBacteria" id="CAB14055">
    <property type="protein sequence ID" value="CAB14055"/>
    <property type="gene ID" value="BSU_21370"/>
</dbReference>
<dbReference type="GeneID" id="939135"/>
<dbReference type="KEGG" id="bsu:BSU21370"/>
<dbReference type="PATRIC" id="fig|224308.179.peg.2333"/>
<dbReference type="eggNOG" id="COG2433">
    <property type="taxonomic scope" value="Bacteria"/>
</dbReference>
<dbReference type="InParanoid" id="O31978"/>
<dbReference type="OrthoDB" id="5090100at2"/>
<dbReference type="BioCyc" id="BSUB:BSU21370-MONOMER"/>
<dbReference type="Proteomes" id="UP000001570">
    <property type="component" value="Chromosome"/>
</dbReference>
<dbReference type="InterPro" id="IPR055783">
    <property type="entry name" value="DUF7359"/>
</dbReference>
<dbReference type="InterPro" id="IPR055784">
    <property type="entry name" value="DUF7360"/>
</dbReference>
<dbReference type="InterPro" id="IPR055785">
    <property type="entry name" value="DUF7361"/>
</dbReference>
<dbReference type="Pfam" id="PF24058">
    <property type="entry name" value="DUF7359"/>
    <property type="match status" value="1"/>
</dbReference>
<dbReference type="Pfam" id="PF24059">
    <property type="entry name" value="DUF7360"/>
    <property type="match status" value="1"/>
</dbReference>
<dbReference type="Pfam" id="PF24060">
    <property type="entry name" value="DUF7361"/>
    <property type="match status" value="1"/>
</dbReference>
<dbReference type="Pfam" id="PF24049">
    <property type="entry name" value="YOMG_N"/>
    <property type="match status" value="1"/>
</dbReference>
<organism>
    <name type="scientific">Bacillus subtilis (strain 168)</name>
    <dbReference type="NCBI Taxonomy" id="224308"/>
    <lineage>
        <taxon>Bacteria</taxon>
        <taxon>Bacillati</taxon>
        <taxon>Bacillota</taxon>
        <taxon>Bacilli</taxon>
        <taxon>Bacillales</taxon>
        <taxon>Bacillaceae</taxon>
        <taxon>Bacillus</taxon>
    </lineage>
</organism>
<accession>O31978</accession>
<protein>
    <recommendedName>
        <fullName>SPbeta prophage-derived uncharacterized protein YomG</fullName>
    </recommendedName>
</protein>
<reference key="1">
    <citation type="journal article" date="1997" name="Nature">
        <title>The complete genome sequence of the Gram-positive bacterium Bacillus subtilis.</title>
        <authorList>
            <person name="Kunst F."/>
            <person name="Ogasawara N."/>
            <person name="Moszer I."/>
            <person name="Albertini A.M."/>
            <person name="Alloni G."/>
            <person name="Azevedo V."/>
            <person name="Bertero M.G."/>
            <person name="Bessieres P."/>
            <person name="Bolotin A."/>
            <person name="Borchert S."/>
            <person name="Borriss R."/>
            <person name="Boursier L."/>
            <person name="Brans A."/>
            <person name="Braun M."/>
            <person name="Brignell S.C."/>
            <person name="Bron S."/>
            <person name="Brouillet S."/>
            <person name="Bruschi C.V."/>
            <person name="Caldwell B."/>
            <person name="Capuano V."/>
            <person name="Carter N.M."/>
            <person name="Choi S.-K."/>
            <person name="Codani J.-J."/>
            <person name="Connerton I.F."/>
            <person name="Cummings N.J."/>
            <person name="Daniel R.A."/>
            <person name="Denizot F."/>
            <person name="Devine K.M."/>
            <person name="Duesterhoeft A."/>
            <person name="Ehrlich S.D."/>
            <person name="Emmerson P.T."/>
            <person name="Entian K.-D."/>
            <person name="Errington J."/>
            <person name="Fabret C."/>
            <person name="Ferrari E."/>
            <person name="Foulger D."/>
            <person name="Fritz C."/>
            <person name="Fujita M."/>
            <person name="Fujita Y."/>
            <person name="Fuma S."/>
            <person name="Galizzi A."/>
            <person name="Galleron N."/>
            <person name="Ghim S.-Y."/>
            <person name="Glaser P."/>
            <person name="Goffeau A."/>
            <person name="Golightly E.J."/>
            <person name="Grandi G."/>
            <person name="Guiseppi G."/>
            <person name="Guy B.J."/>
            <person name="Haga K."/>
            <person name="Haiech J."/>
            <person name="Harwood C.R."/>
            <person name="Henaut A."/>
            <person name="Hilbert H."/>
            <person name="Holsappel S."/>
            <person name="Hosono S."/>
            <person name="Hullo M.-F."/>
            <person name="Itaya M."/>
            <person name="Jones L.-M."/>
            <person name="Joris B."/>
            <person name="Karamata D."/>
            <person name="Kasahara Y."/>
            <person name="Klaerr-Blanchard M."/>
            <person name="Klein C."/>
            <person name="Kobayashi Y."/>
            <person name="Koetter P."/>
            <person name="Koningstein G."/>
            <person name="Krogh S."/>
            <person name="Kumano M."/>
            <person name="Kurita K."/>
            <person name="Lapidus A."/>
            <person name="Lardinois S."/>
            <person name="Lauber J."/>
            <person name="Lazarevic V."/>
            <person name="Lee S.-M."/>
            <person name="Levine A."/>
            <person name="Liu H."/>
            <person name="Masuda S."/>
            <person name="Mauel C."/>
            <person name="Medigue C."/>
            <person name="Medina N."/>
            <person name="Mellado R.P."/>
            <person name="Mizuno M."/>
            <person name="Moestl D."/>
            <person name="Nakai S."/>
            <person name="Noback M."/>
            <person name="Noone D."/>
            <person name="O'Reilly M."/>
            <person name="Ogawa K."/>
            <person name="Ogiwara A."/>
            <person name="Oudega B."/>
            <person name="Park S.-H."/>
            <person name="Parro V."/>
            <person name="Pohl T.M."/>
            <person name="Portetelle D."/>
            <person name="Porwollik S."/>
            <person name="Prescott A.M."/>
            <person name="Presecan E."/>
            <person name="Pujic P."/>
            <person name="Purnelle B."/>
            <person name="Rapoport G."/>
            <person name="Rey M."/>
            <person name="Reynolds S."/>
            <person name="Rieger M."/>
            <person name="Rivolta C."/>
            <person name="Rocha E."/>
            <person name="Roche B."/>
            <person name="Rose M."/>
            <person name="Sadaie Y."/>
            <person name="Sato T."/>
            <person name="Scanlan E."/>
            <person name="Schleich S."/>
            <person name="Schroeter R."/>
            <person name="Scoffone F."/>
            <person name="Sekiguchi J."/>
            <person name="Sekowska A."/>
            <person name="Seror S.J."/>
            <person name="Serror P."/>
            <person name="Shin B.-S."/>
            <person name="Soldo B."/>
            <person name="Sorokin A."/>
            <person name="Tacconi E."/>
            <person name="Takagi T."/>
            <person name="Takahashi H."/>
            <person name="Takemaru K."/>
            <person name="Takeuchi M."/>
            <person name="Tamakoshi A."/>
            <person name="Tanaka T."/>
            <person name="Terpstra P."/>
            <person name="Tognoni A."/>
            <person name="Tosato V."/>
            <person name="Uchiyama S."/>
            <person name="Vandenbol M."/>
            <person name="Vannier F."/>
            <person name="Vassarotti A."/>
            <person name="Viari A."/>
            <person name="Wambutt R."/>
            <person name="Wedler E."/>
            <person name="Wedler H."/>
            <person name="Weitzenegger T."/>
            <person name="Winters P."/>
            <person name="Wipat A."/>
            <person name="Yamamoto H."/>
            <person name="Yamane K."/>
            <person name="Yasumoto K."/>
            <person name="Yata K."/>
            <person name="Yoshida K."/>
            <person name="Yoshikawa H.-F."/>
            <person name="Zumstein E."/>
            <person name="Yoshikawa H."/>
            <person name="Danchin A."/>
        </authorList>
    </citation>
    <scope>NUCLEOTIDE SEQUENCE [LARGE SCALE GENOMIC DNA]</scope>
    <source>
        <strain>168</strain>
    </source>
</reference>
<keyword id="KW-0175">Coiled coil</keyword>
<keyword id="KW-1185">Reference proteome</keyword>
<feature type="chain" id="PRO_0000360591" description="SPbeta prophage-derived uncharacterized protein YomG">
    <location>
        <begin position="1"/>
        <end position="875"/>
    </location>
</feature>
<feature type="domain" description="Fibronectin type-III">
    <location>
        <begin position="537"/>
        <end position="648"/>
    </location>
</feature>
<feature type="coiled-coil region" evidence="1">
    <location>
        <begin position="351"/>
        <end position="381"/>
    </location>
</feature>
<sequence length="875" mass="98885">MLNKFKPGEILLSLAKPNKKKIANIADFSNVSLNLSFADLNDLSFNIPLKARYNFLMKPNHVAKLMREWYLIKAEFLNRVEWFVITGLTKSENEEQTIQVRCQGLPYILHKNKIRSYQGVSKNLQEVATDCLKGTRLNIGYIDPSFNEKRRSFDVTSTRYEFLKTIWETFEAVPVFDTVKNTVSFYKKDTVSKYKGVQFSPERFMIDMEDTIDIDEVVTRLNITGKDGIVINSVNPTGQSYLDDFSYFLYPFKRDKNRNVITHSDYMDDDLCHAILDYNELVNKEGSSFHLLLNQKRDLETQKTTQENKLFTLENIELQQILDKITVAKKAGDDTKDLIKQRDAKLLEVTAKKAEISRINSQITNISQEIEKLKDRLSMDKFLGEELKKQLSYFIFEDDWTNDNIFDETELYEKGLEELSNRNAPPVDIRTNIVNLFNVNSEKAFWDRIYLGDIIRVVNKNFRTDVKATLSGMTFDFDQQSIQVTLSNGKRARSLEQEFANTLYTTKKASTEYNKKKIDYDTLLVNYNARNDRISSPVANPTILNNGTAITHVVNDNGSVDISIEWQFPNSKEDKYNIDGFLVHCYSDTSSDTYIFGSKMSSEQYLSVSYDKRIATLTGQVSNKYYTFGIQAYRTVEASIDSSGRILSDIIQPQFPSENPYLPSNSVEVKGSLSGRVNGLYTISTEAKPEDPEKGTIWINPKNNKQELFNGEEWVVSSAGSADSLNGFTASTTTSPNSIPVRNESGIISGSIDGNAEMLGGRAASDYALAENIPIPPKFAKGIYTGDGTLSKQIPLTFTPDLVKITPISPEDSQLVIESQLGGYAYQVTSTGLSLIGGDLGYGALGNNLFVTGSDSNCRGNKLNVKYIWEAYQQN</sequence>
<name>YOMG_BACSU</name>
<evidence type="ECO:0000255" key="1"/>